<organism>
    <name type="scientific">Shigella flexneri serotype 5b (strain 8401)</name>
    <dbReference type="NCBI Taxonomy" id="373384"/>
    <lineage>
        <taxon>Bacteria</taxon>
        <taxon>Pseudomonadati</taxon>
        <taxon>Pseudomonadota</taxon>
        <taxon>Gammaproteobacteria</taxon>
        <taxon>Enterobacterales</taxon>
        <taxon>Enterobacteriaceae</taxon>
        <taxon>Shigella</taxon>
    </lineage>
</organism>
<dbReference type="EMBL" id="CP000266">
    <property type="protein sequence ID" value="ABF05897.1"/>
    <property type="molecule type" value="Genomic_DNA"/>
</dbReference>
<dbReference type="RefSeq" id="WP_000818601.1">
    <property type="nucleotide sequence ID" value="NC_008258.1"/>
</dbReference>
<dbReference type="SMR" id="Q0SYG8"/>
<dbReference type="GeneID" id="93778356"/>
<dbReference type="KEGG" id="sfv:SFV_3889"/>
<dbReference type="HOGENOM" id="CLU_069356_5_0_6"/>
<dbReference type="Proteomes" id="UP000000659">
    <property type="component" value="Chromosome"/>
</dbReference>
<dbReference type="GO" id="GO:0043590">
    <property type="term" value="C:bacterial nucleoid"/>
    <property type="evidence" value="ECO:0007669"/>
    <property type="project" value="UniProtKB-UniRule"/>
</dbReference>
<dbReference type="GO" id="GO:0005737">
    <property type="term" value="C:cytoplasm"/>
    <property type="evidence" value="ECO:0007669"/>
    <property type="project" value="UniProtKB-UniRule"/>
</dbReference>
<dbReference type="GO" id="GO:0003700">
    <property type="term" value="F:DNA-binding transcription factor activity"/>
    <property type="evidence" value="ECO:0007669"/>
    <property type="project" value="TreeGrafter"/>
</dbReference>
<dbReference type="GO" id="GO:0000976">
    <property type="term" value="F:transcription cis-regulatory region binding"/>
    <property type="evidence" value="ECO:0007669"/>
    <property type="project" value="TreeGrafter"/>
</dbReference>
<dbReference type="GO" id="GO:0051301">
    <property type="term" value="P:cell division"/>
    <property type="evidence" value="ECO:0007669"/>
    <property type="project" value="UniProtKB-KW"/>
</dbReference>
<dbReference type="GO" id="GO:0010974">
    <property type="term" value="P:negative regulation of division septum assembly"/>
    <property type="evidence" value="ECO:0007669"/>
    <property type="project" value="InterPro"/>
</dbReference>
<dbReference type="FunFam" id="1.10.357.10:FF:000002">
    <property type="entry name" value="Nucleoid occlusion factor SlmA"/>
    <property type="match status" value="1"/>
</dbReference>
<dbReference type="Gene3D" id="1.10.357.10">
    <property type="entry name" value="Tetracycline Repressor, domain 2"/>
    <property type="match status" value="1"/>
</dbReference>
<dbReference type="HAMAP" id="MF_01839">
    <property type="entry name" value="NO_factor_SlmA"/>
    <property type="match status" value="1"/>
</dbReference>
<dbReference type="InterPro" id="IPR023772">
    <property type="entry name" value="DNA-bd_HTH_TetR-type_CS"/>
</dbReference>
<dbReference type="InterPro" id="IPR009057">
    <property type="entry name" value="Homeodomain-like_sf"/>
</dbReference>
<dbReference type="InterPro" id="IPR050109">
    <property type="entry name" value="HTH-type_TetR-like_transc_reg"/>
</dbReference>
<dbReference type="InterPro" id="IPR001647">
    <property type="entry name" value="HTH_TetR"/>
</dbReference>
<dbReference type="InterPro" id="IPR023769">
    <property type="entry name" value="NO_SlmA"/>
</dbReference>
<dbReference type="InterPro" id="IPR054580">
    <property type="entry name" value="SlmA-like_C"/>
</dbReference>
<dbReference type="InterPro" id="IPR036271">
    <property type="entry name" value="Tet_transcr_reg_TetR-rel_C_sf"/>
</dbReference>
<dbReference type="NCBIfam" id="NF007015">
    <property type="entry name" value="PRK09480.1"/>
    <property type="match status" value="1"/>
</dbReference>
<dbReference type="PANTHER" id="PTHR30055">
    <property type="entry name" value="HTH-TYPE TRANSCRIPTIONAL REGULATOR RUTR"/>
    <property type="match status" value="1"/>
</dbReference>
<dbReference type="PANTHER" id="PTHR30055:SF183">
    <property type="entry name" value="NUCLEOID OCCLUSION FACTOR SLMA"/>
    <property type="match status" value="1"/>
</dbReference>
<dbReference type="Pfam" id="PF22276">
    <property type="entry name" value="SlmA-like_C"/>
    <property type="match status" value="1"/>
</dbReference>
<dbReference type="Pfam" id="PF00440">
    <property type="entry name" value="TetR_N"/>
    <property type="match status" value="1"/>
</dbReference>
<dbReference type="SUPFAM" id="SSF46689">
    <property type="entry name" value="Homeodomain-like"/>
    <property type="match status" value="1"/>
</dbReference>
<dbReference type="SUPFAM" id="SSF48498">
    <property type="entry name" value="Tetracyclin repressor-like, C-terminal domain"/>
    <property type="match status" value="1"/>
</dbReference>
<dbReference type="PROSITE" id="PS01081">
    <property type="entry name" value="HTH_TETR_1"/>
    <property type="match status" value="1"/>
</dbReference>
<dbReference type="PROSITE" id="PS50977">
    <property type="entry name" value="HTH_TETR_2"/>
    <property type="match status" value="1"/>
</dbReference>
<gene>
    <name evidence="1" type="primary">slmA</name>
    <name type="ordered locus">SFV_3889</name>
</gene>
<reference key="1">
    <citation type="journal article" date="2006" name="BMC Genomics">
        <title>Complete genome sequence of Shigella flexneri 5b and comparison with Shigella flexneri 2a.</title>
        <authorList>
            <person name="Nie H."/>
            <person name="Yang F."/>
            <person name="Zhang X."/>
            <person name="Yang J."/>
            <person name="Chen L."/>
            <person name="Wang J."/>
            <person name="Xiong Z."/>
            <person name="Peng J."/>
            <person name="Sun L."/>
            <person name="Dong J."/>
            <person name="Xue Y."/>
            <person name="Xu X."/>
            <person name="Chen S."/>
            <person name="Yao Z."/>
            <person name="Shen Y."/>
            <person name="Jin Q."/>
        </authorList>
    </citation>
    <scope>NUCLEOTIDE SEQUENCE [LARGE SCALE GENOMIC DNA]</scope>
    <source>
        <strain>8401</strain>
    </source>
</reference>
<name>SLMA_SHIF8</name>
<sequence length="198" mass="22836">MAEKQTAKRNRREEILQSLALMLESSDGSQRITTAKLAASVGVSEAALYRHFPSKTRMFDSLIEFIEDSLITRINLILKDEKDTTARLRLIVLLLLGFGERNPGLTRILTGHALMFEQDRLQGRINQLFERIEAQLRQVLREKRMREGEGYTTDETLLASQILAFCEGMLSRFVRSEFKYRPTDDFDARWPLIAAQLQ</sequence>
<proteinExistence type="inferred from homology"/>
<feature type="chain" id="PRO_1000070535" description="Nucleoid occlusion factor SlmA">
    <location>
        <begin position="1"/>
        <end position="198"/>
    </location>
</feature>
<feature type="domain" description="HTH tetR-type" evidence="1">
    <location>
        <begin position="10"/>
        <end position="70"/>
    </location>
</feature>
<feature type="DNA-binding region" description="H-T-H motif" evidence="1">
    <location>
        <begin position="33"/>
        <end position="52"/>
    </location>
</feature>
<feature type="coiled-coil region" evidence="1">
    <location>
        <begin position="117"/>
        <end position="144"/>
    </location>
</feature>
<comment type="function">
    <text evidence="1">Required for nucleoid occlusion (NO) phenomenon, which prevents Z-ring formation and cell division over the nucleoid. Acts as a DNA-associated cell division inhibitor that binds simultaneously chromosomal DNA and FtsZ, and disrupts the assembly of FtsZ polymers. SlmA-DNA-binding sequences (SBS) are dispersed on non-Ter regions of the chromosome, preventing FtsZ polymerization at these regions.</text>
</comment>
<comment type="subunit">
    <text evidence="1">Homodimer. Interacts with FtsZ.</text>
</comment>
<comment type="subcellular location">
    <subcellularLocation>
        <location evidence="1">Cytoplasm</location>
        <location evidence="1">Nucleoid</location>
    </subcellularLocation>
</comment>
<comment type="similarity">
    <text evidence="1">Belongs to the nucleoid occlusion factor SlmA family.</text>
</comment>
<accession>Q0SYG8</accession>
<protein>
    <recommendedName>
        <fullName evidence="1">Nucleoid occlusion factor SlmA</fullName>
    </recommendedName>
</protein>
<keyword id="KW-0131">Cell cycle</keyword>
<keyword id="KW-0132">Cell division</keyword>
<keyword id="KW-0175">Coiled coil</keyword>
<keyword id="KW-0963">Cytoplasm</keyword>
<keyword id="KW-0238">DNA-binding</keyword>
<evidence type="ECO:0000255" key="1">
    <source>
        <dbReference type="HAMAP-Rule" id="MF_01839"/>
    </source>
</evidence>